<evidence type="ECO:0000255" key="1">
    <source>
        <dbReference type="HAMAP-Rule" id="MF_01455"/>
    </source>
</evidence>
<protein>
    <recommendedName>
        <fullName evidence="1">UPF0757 protein YmgG</fullName>
    </recommendedName>
</protein>
<comment type="similarity">
    <text evidence="1">Belongs to the UPF0757 family.</text>
</comment>
<keyword id="KW-1185">Reference proteome</keyword>
<organism>
    <name type="scientific">Escherichia coli O127:H6 (strain E2348/69 / EPEC)</name>
    <dbReference type="NCBI Taxonomy" id="574521"/>
    <lineage>
        <taxon>Bacteria</taxon>
        <taxon>Pseudomonadati</taxon>
        <taxon>Pseudomonadota</taxon>
        <taxon>Gammaproteobacteria</taxon>
        <taxon>Enterobacterales</taxon>
        <taxon>Enterobacteriaceae</taxon>
        <taxon>Escherichia</taxon>
    </lineage>
</organism>
<accession>B7UQ55</accession>
<name>YMGG_ECO27</name>
<gene>
    <name evidence="1" type="primary">ymgG</name>
    <name type="ordered locus">E2348C_1289</name>
</gene>
<dbReference type="EMBL" id="FM180568">
    <property type="protein sequence ID" value="CAS08837.1"/>
    <property type="molecule type" value="Genomic_DNA"/>
</dbReference>
<dbReference type="RefSeq" id="WP_000726974.1">
    <property type="nucleotide sequence ID" value="NC_011601.1"/>
</dbReference>
<dbReference type="KEGG" id="ecg:E2348C_1289"/>
<dbReference type="HOGENOM" id="CLU_164687_0_0_6"/>
<dbReference type="Proteomes" id="UP000008205">
    <property type="component" value="Chromosome"/>
</dbReference>
<dbReference type="HAMAP" id="MF_01455">
    <property type="entry name" value="UPF0757"/>
    <property type="match status" value="1"/>
</dbReference>
<dbReference type="InterPro" id="IPR025693">
    <property type="entry name" value="Gly-zipper_OmpA-like_dom"/>
</dbReference>
<dbReference type="InterPro" id="IPR027367">
    <property type="entry name" value="Gly-zipper_YMGG"/>
</dbReference>
<dbReference type="InterPro" id="IPR022833">
    <property type="entry name" value="UPF0757_YmgG"/>
</dbReference>
<dbReference type="Pfam" id="PF13436">
    <property type="entry name" value="Gly-zipper_OmpA"/>
    <property type="match status" value="1"/>
</dbReference>
<dbReference type="Pfam" id="PF13441">
    <property type="entry name" value="Gly-zipper_YMGG"/>
    <property type="match status" value="1"/>
</dbReference>
<sequence length="114" mass="10807">MKKKILAFGLISALFCSTPAMADMNRTTKGALLGAGVGLLTGNGVNGVLKGAAVGAGVGAVTEKGRDGKNARKGAKVGAAVGAVTGVLTGNGLEGAIKGAVIGGTGGAILGKMK</sequence>
<proteinExistence type="inferred from homology"/>
<feature type="chain" id="PRO_0000388954" description="UPF0757 protein YmgG">
    <location>
        <begin position="1"/>
        <end position="114"/>
    </location>
</feature>
<reference key="1">
    <citation type="journal article" date="2009" name="J. Bacteriol.">
        <title>Complete genome sequence and comparative genome analysis of enteropathogenic Escherichia coli O127:H6 strain E2348/69.</title>
        <authorList>
            <person name="Iguchi A."/>
            <person name="Thomson N.R."/>
            <person name="Ogura Y."/>
            <person name="Saunders D."/>
            <person name="Ooka T."/>
            <person name="Henderson I.R."/>
            <person name="Harris D."/>
            <person name="Asadulghani M."/>
            <person name="Kurokawa K."/>
            <person name="Dean P."/>
            <person name="Kenny B."/>
            <person name="Quail M.A."/>
            <person name="Thurston S."/>
            <person name="Dougan G."/>
            <person name="Hayashi T."/>
            <person name="Parkhill J."/>
            <person name="Frankel G."/>
        </authorList>
    </citation>
    <scope>NUCLEOTIDE SEQUENCE [LARGE SCALE GENOMIC DNA]</scope>
    <source>
        <strain>E2348/69 / EPEC</strain>
    </source>
</reference>